<accession>Q7MHG4</accession>
<evidence type="ECO:0000255" key="1">
    <source>
        <dbReference type="HAMAP-Rule" id="MF_00181"/>
    </source>
</evidence>
<reference key="1">
    <citation type="journal article" date="2003" name="Genome Res.">
        <title>Comparative genome analysis of Vibrio vulnificus, a marine pathogen.</title>
        <authorList>
            <person name="Chen C.-Y."/>
            <person name="Wu K.-M."/>
            <person name="Chang Y.-C."/>
            <person name="Chang C.-H."/>
            <person name="Tsai H.-C."/>
            <person name="Liao T.-L."/>
            <person name="Liu Y.-M."/>
            <person name="Chen H.-J."/>
            <person name="Shen A.B.-T."/>
            <person name="Li J.-C."/>
            <person name="Su T.-L."/>
            <person name="Shao C.-P."/>
            <person name="Lee C.-T."/>
            <person name="Hor L.-I."/>
            <person name="Tsai S.-F."/>
        </authorList>
    </citation>
    <scope>NUCLEOTIDE SEQUENCE [LARGE SCALE GENOMIC DNA]</scope>
    <source>
        <strain>YJ016</strain>
    </source>
</reference>
<keyword id="KW-0031">Aminopeptidase</keyword>
<keyword id="KW-0963">Cytoplasm</keyword>
<keyword id="KW-0378">Hydrolase</keyword>
<keyword id="KW-0464">Manganese</keyword>
<keyword id="KW-0479">Metal-binding</keyword>
<keyword id="KW-0645">Protease</keyword>
<proteinExistence type="inferred from homology"/>
<sequence>MEFSVKSGSPEKQRSACIVVGVFEPRRLSPVAEQLDKISDGYISSLLRRGDLEGKPGQMLLLHQVPGVLSERVLLVGCGKERELGERQYKEIIQKTINTLNETGSMEAVCFLTELHVKGRDTYWKVRQAVEATKDGLYTFDQFKSVKPETRRPLRKLVFNVPTRRELNLGEKAITHGLAIASGVKACKDLGNMPPNIANPAYLASQARRLADDYETITTKIIGEQEMEKLGMSSYLAVGRGSKNESMMSIIEYKGHPDSEAKPIVLVGKGLTFDSGGISLKPGEGMDEMKYDMCGAASVFGTMKALAKLNLPVNVIGVLAGCENMPGSNAYRPGDILTTMSGQTVEVLNTDAEGRLVLCDALTYVERFEPDCVVDVATLTGACVIALGHHITGVLSNHNPLAHELVNASEQSSDRAWRLPMADEYHEQLKSPFADMANIGGRPGGTITAACFLSKFAKKYNWAHLDIAGTAWKSGAAKGSTGRPVSMLVQFLLNRSGQETEE</sequence>
<gene>
    <name evidence="1" type="primary">pepA</name>
    <name type="ordered locus">VV2907</name>
</gene>
<organism>
    <name type="scientific">Vibrio vulnificus (strain YJ016)</name>
    <dbReference type="NCBI Taxonomy" id="196600"/>
    <lineage>
        <taxon>Bacteria</taxon>
        <taxon>Pseudomonadati</taxon>
        <taxon>Pseudomonadota</taxon>
        <taxon>Gammaproteobacteria</taxon>
        <taxon>Vibrionales</taxon>
        <taxon>Vibrionaceae</taxon>
        <taxon>Vibrio</taxon>
    </lineage>
</organism>
<feature type="chain" id="PRO_0000165812" description="Probable cytosol aminopeptidase">
    <location>
        <begin position="1"/>
        <end position="502"/>
    </location>
</feature>
<feature type="active site" evidence="1">
    <location>
        <position position="281"/>
    </location>
</feature>
<feature type="active site" evidence="1">
    <location>
        <position position="355"/>
    </location>
</feature>
<feature type="binding site" evidence="1">
    <location>
        <position position="269"/>
    </location>
    <ligand>
        <name>Mn(2+)</name>
        <dbReference type="ChEBI" id="CHEBI:29035"/>
        <label>2</label>
    </ligand>
</feature>
<feature type="binding site" evidence="1">
    <location>
        <position position="274"/>
    </location>
    <ligand>
        <name>Mn(2+)</name>
        <dbReference type="ChEBI" id="CHEBI:29035"/>
        <label>1</label>
    </ligand>
</feature>
<feature type="binding site" evidence="1">
    <location>
        <position position="274"/>
    </location>
    <ligand>
        <name>Mn(2+)</name>
        <dbReference type="ChEBI" id="CHEBI:29035"/>
        <label>2</label>
    </ligand>
</feature>
<feature type="binding site" evidence="1">
    <location>
        <position position="292"/>
    </location>
    <ligand>
        <name>Mn(2+)</name>
        <dbReference type="ChEBI" id="CHEBI:29035"/>
        <label>2</label>
    </ligand>
</feature>
<feature type="binding site" evidence="1">
    <location>
        <position position="351"/>
    </location>
    <ligand>
        <name>Mn(2+)</name>
        <dbReference type="ChEBI" id="CHEBI:29035"/>
        <label>1</label>
    </ligand>
</feature>
<feature type="binding site" evidence="1">
    <location>
        <position position="353"/>
    </location>
    <ligand>
        <name>Mn(2+)</name>
        <dbReference type="ChEBI" id="CHEBI:29035"/>
        <label>1</label>
    </ligand>
</feature>
<feature type="binding site" evidence="1">
    <location>
        <position position="353"/>
    </location>
    <ligand>
        <name>Mn(2+)</name>
        <dbReference type="ChEBI" id="CHEBI:29035"/>
        <label>2</label>
    </ligand>
</feature>
<dbReference type="EC" id="3.4.11.1" evidence="1"/>
<dbReference type="EC" id="3.4.11.10" evidence="1"/>
<dbReference type="EMBL" id="BA000037">
    <property type="protein sequence ID" value="BAC95671.1"/>
    <property type="molecule type" value="Genomic_DNA"/>
</dbReference>
<dbReference type="RefSeq" id="WP_011079433.1">
    <property type="nucleotide sequence ID" value="NC_005139.1"/>
</dbReference>
<dbReference type="SMR" id="Q7MHG4"/>
<dbReference type="STRING" id="672.VV93_v1c26310"/>
<dbReference type="MEROPS" id="M17.003"/>
<dbReference type="GeneID" id="93895736"/>
<dbReference type="KEGG" id="vvy:VV2907"/>
<dbReference type="eggNOG" id="COG0260">
    <property type="taxonomic scope" value="Bacteria"/>
</dbReference>
<dbReference type="HOGENOM" id="CLU_013734_2_2_6"/>
<dbReference type="Proteomes" id="UP000002675">
    <property type="component" value="Chromosome I"/>
</dbReference>
<dbReference type="GO" id="GO:0005737">
    <property type="term" value="C:cytoplasm"/>
    <property type="evidence" value="ECO:0007669"/>
    <property type="project" value="UniProtKB-SubCell"/>
</dbReference>
<dbReference type="GO" id="GO:0030145">
    <property type="term" value="F:manganese ion binding"/>
    <property type="evidence" value="ECO:0007669"/>
    <property type="project" value="UniProtKB-UniRule"/>
</dbReference>
<dbReference type="GO" id="GO:0070006">
    <property type="term" value="F:metalloaminopeptidase activity"/>
    <property type="evidence" value="ECO:0007669"/>
    <property type="project" value="InterPro"/>
</dbReference>
<dbReference type="GO" id="GO:0006508">
    <property type="term" value="P:proteolysis"/>
    <property type="evidence" value="ECO:0007669"/>
    <property type="project" value="UniProtKB-KW"/>
</dbReference>
<dbReference type="CDD" id="cd00433">
    <property type="entry name" value="Peptidase_M17"/>
    <property type="match status" value="1"/>
</dbReference>
<dbReference type="FunFam" id="3.40.220.10:FF:000001">
    <property type="entry name" value="Probable cytosol aminopeptidase"/>
    <property type="match status" value="1"/>
</dbReference>
<dbReference type="FunFam" id="3.40.630.10:FF:000004">
    <property type="entry name" value="Probable cytosol aminopeptidase"/>
    <property type="match status" value="1"/>
</dbReference>
<dbReference type="Gene3D" id="3.40.220.10">
    <property type="entry name" value="Leucine Aminopeptidase, subunit E, domain 1"/>
    <property type="match status" value="1"/>
</dbReference>
<dbReference type="Gene3D" id="3.40.630.10">
    <property type="entry name" value="Zn peptidases"/>
    <property type="match status" value="1"/>
</dbReference>
<dbReference type="HAMAP" id="MF_00181">
    <property type="entry name" value="Cytosol_peptidase_M17"/>
    <property type="match status" value="1"/>
</dbReference>
<dbReference type="InterPro" id="IPR011356">
    <property type="entry name" value="Leucine_aapep/pepB"/>
</dbReference>
<dbReference type="InterPro" id="IPR043472">
    <property type="entry name" value="Macro_dom-like"/>
</dbReference>
<dbReference type="InterPro" id="IPR000819">
    <property type="entry name" value="Peptidase_M17_C"/>
</dbReference>
<dbReference type="InterPro" id="IPR023042">
    <property type="entry name" value="Peptidase_M17_leu_NH2_pept"/>
</dbReference>
<dbReference type="InterPro" id="IPR008283">
    <property type="entry name" value="Peptidase_M17_N"/>
</dbReference>
<dbReference type="NCBIfam" id="NF002072">
    <property type="entry name" value="PRK00913.1-1"/>
    <property type="match status" value="1"/>
</dbReference>
<dbReference type="NCBIfam" id="NF002073">
    <property type="entry name" value="PRK00913.1-2"/>
    <property type="match status" value="1"/>
</dbReference>
<dbReference type="NCBIfam" id="NF002074">
    <property type="entry name" value="PRK00913.1-4"/>
    <property type="match status" value="1"/>
</dbReference>
<dbReference type="PANTHER" id="PTHR11963:SF23">
    <property type="entry name" value="CYTOSOL AMINOPEPTIDASE"/>
    <property type="match status" value="1"/>
</dbReference>
<dbReference type="PANTHER" id="PTHR11963">
    <property type="entry name" value="LEUCINE AMINOPEPTIDASE-RELATED"/>
    <property type="match status" value="1"/>
</dbReference>
<dbReference type="Pfam" id="PF00883">
    <property type="entry name" value="Peptidase_M17"/>
    <property type="match status" value="1"/>
</dbReference>
<dbReference type="Pfam" id="PF02789">
    <property type="entry name" value="Peptidase_M17_N"/>
    <property type="match status" value="1"/>
</dbReference>
<dbReference type="PRINTS" id="PR00481">
    <property type="entry name" value="LAMNOPPTDASE"/>
</dbReference>
<dbReference type="SUPFAM" id="SSF52949">
    <property type="entry name" value="Macro domain-like"/>
    <property type="match status" value="1"/>
</dbReference>
<dbReference type="SUPFAM" id="SSF53187">
    <property type="entry name" value="Zn-dependent exopeptidases"/>
    <property type="match status" value="1"/>
</dbReference>
<dbReference type="PROSITE" id="PS00631">
    <property type="entry name" value="CYTOSOL_AP"/>
    <property type="match status" value="1"/>
</dbReference>
<comment type="function">
    <text evidence="1">Presumably involved in the processing and regular turnover of intracellular proteins. Catalyzes the removal of unsubstituted N-terminal amino acids from various peptides.</text>
</comment>
<comment type="catalytic activity">
    <reaction evidence="1">
        <text>Release of an N-terminal amino acid, Xaa-|-Yaa-, in which Xaa is preferably Leu, but may be other amino acids including Pro although not Arg or Lys, and Yaa may be Pro. Amino acid amides and methyl esters are also readily hydrolyzed, but rates on arylamides are exceedingly low.</text>
        <dbReference type="EC" id="3.4.11.1"/>
    </reaction>
</comment>
<comment type="catalytic activity">
    <reaction evidence="1">
        <text>Release of an N-terminal amino acid, preferentially leucine, but not glutamic or aspartic acids.</text>
        <dbReference type="EC" id="3.4.11.10"/>
    </reaction>
</comment>
<comment type="cofactor">
    <cofactor evidence="1">
        <name>Mn(2+)</name>
        <dbReference type="ChEBI" id="CHEBI:29035"/>
    </cofactor>
    <text evidence="1">Binds 2 manganese ions per subunit.</text>
</comment>
<comment type="subcellular location">
    <subcellularLocation>
        <location evidence="1">Cytoplasm</location>
    </subcellularLocation>
</comment>
<comment type="similarity">
    <text evidence="1">Belongs to the peptidase M17 family.</text>
</comment>
<protein>
    <recommendedName>
        <fullName evidence="1">Probable cytosol aminopeptidase</fullName>
        <ecNumber evidence="1">3.4.11.1</ecNumber>
    </recommendedName>
    <alternativeName>
        <fullName evidence="1">Leucine aminopeptidase</fullName>
        <shortName evidence="1">LAP</shortName>
        <ecNumber evidence="1">3.4.11.10</ecNumber>
    </alternativeName>
    <alternativeName>
        <fullName evidence="1">Leucyl aminopeptidase</fullName>
    </alternativeName>
</protein>
<name>AMPA_VIBVY</name>